<protein>
    <recommendedName>
        <fullName evidence="1">S-ribosylhomocysteine lyase</fullName>
        <ecNumber evidence="1">4.4.1.21</ecNumber>
    </recommendedName>
    <alternativeName>
        <fullName evidence="1">AI-2 synthesis protein</fullName>
    </alternativeName>
    <alternativeName>
        <fullName evidence="1">Autoinducer-2 production protein LuxS</fullName>
    </alternativeName>
</protein>
<proteinExistence type="inferred from homology"/>
<accession>Q32CN6</accession>
<sequence>MPLLDSFTVDHTRMEAPAVRVAKTMNTPHGDAITVFDLRFCVPNKEVMPERGIHTLEHLFAGFMRNHLNGNGVEIIDISPMGCRTGFYMSLIGTPDEQRVADAWKAAMEDVLKVQDQNQIPELNVYQCGTYQMHSLQEAQDIARSILERDVRINSNEELALPKEKLQELHI</sequence>
<evidence type="ECO:0000255" key="1">
    <source>
        <dbReference type="HAMAP-Rule" id="MF_00091"/>
    </source>
</evidence>
<dbReference type="EC" id="4.4.1.21" evidence="1"/>
<dbReference type="EMBL" id="CP000034">
    <property type="protein sequence ID" value="ABB62919.1"/>
    <property type="molecule type" value="Genomic_DNA"/>
</dbReference>
<dbReference type="RefSeq" id="WP_001130211.1">
    <property type="nucleotide sequence ID" value="NC_007606.1"/>
</dbReference>
<dbReference type="RefSeq" id="YP_404410.1">
    <property type="nucleotide sequence ID" value="NC_007606.1"/>
</dbReference>
<dbReference type="SMR" id="Q32CN6"/>
<dbReference type="STRING" id="300267.SDY_2884"/>
<dbReference type="EnsemblBacteria" id="ABB62919">
    <property type="protein sequence ID" value="ABB62919"/>
    <property type="gene ID" value="SDY_2884"/>
</dbReference>
<dbReference type="GeneID" id="93779324"/>
<dbReference type="KEGG" id="sdy:SDY_2884"/>
<dbReference type="PATRIC" id="fig|300267.13.peg.3468"/>
<dbReference type="HOGENOM" id="CLU_107531_2_0_6"/>
<dbReference type="Proteomes" id="UP000002716">
    <property type="component" value="Chromosome"/>
</dbReference>
<dbReference type="GO" id="GO:0005506">
    <property type="term" value="F:iron ion binding"/>
    <property type="evidence" value="ECO:0007669"/>
    <property type="project" value="InterPro"/>
</dbReference>
<dbReference type="GO" id="GO:0043768">
    <property type="term" value="F:S-ribosylhomocysteine lyase activity"/>
    <property type="evidence" value="ECO:0007669"/>
    <property type="project" value="UniProtKB-UniRule"/>
</dbReference>
<dbReference type="GO" id="GO:0009372">
    <property type="term" value="P:quorum sensing"/>
    <property type="evidence" value="ECO:0007669"/>
    <property type="project" value="UniProtKB-UniRule"/>
</dbReference>
<dbReference type="FunFam" id="3.30.1360.80:FF:000001">
    <property type="entry name" value="S-ribosylhomocysteine lyase"/>
    <property type="match status" value="1"/>
</dbReference>
<dbReference type="Gene3D" id="3.30.1360.80">
    <property type="entry name" value="S-ribosylhomocysteinase (LuxS)"/>
    <property type="match status" value="1"/>
</dbReference>
<dbReference type="HAMAP" id="MF_00091">
    <property type="entry name" value="LuxS"/>
    <property type="match status" value="1"/>
</dbReference>
<dbReference type="InterPro" id="IPR037005">
    <property type="entry name" value="LuxS_sf"/>
</dbReference>
<dbReference type="InterPro" id="IPR011249">
    <property type="entry name" value="Metalloenz_LuxS/M16"/>
</dbReference>
<dbReference type="InterPro" id="IPR003815">
    <property type="entry name" value="S-ribosylhomocysteinase"/>
</dbReference>
<dbReference type="NCBIfam" id="NF002602">
    <property type="entry name" value="PRK02260.1-2"/>
    <property type="match status" value="1"/>
</dbReference>
<dbReference type="PANTHER" id="PTHR35799">
    <property type="entry name" value="S-RIBOSYLHOMOCYSTEINE LYASE"/>
    <property type="match status" value="1"/>
</dbReference>
<dbReference type="PANTHER" id="PTHR35799:SF1">
    <property type="entry name" value="S-RIBOSYLHOMOCYSTEINE LYASE"/>
    <property type="match status" value="1"/>
</dbReference>
<dbReference type="Pfam" id="PF02664">
    <property type="entry name" value="LuxS"/>
    <property type="match status" value="1"/>
</dbReference>
<dbReference type="PIRSF" id="PIRSF006160">
    <property type="entry name" value="AI2"/>
    <property type="match status" value="1"/>
</dbReference>
<dbReference type="PRINTS" id="PR01487">
    <property type="entry name" value="LUXSPROTEIN"/>
</dbReference>
<dbReference type="SUPFAM" id="SSF63411">
    <property type="entry name" value="LuxS/MPP-like metallohydrolase"/>
    <property type="match status" value="1"/>
</dbReference>
<keyword id="KW-0071">Autoinducer synthesis</keyword>
<keyword id="KW-0408">Iron</keyword>
<keyword id="KW-0456">Lyase</keyword>
<keyword id="KW-0479">Metal-binding</keyword>
<keyword id="KW-0673">Quorum sensing</keyword>
<keyword id="KW-1185">Reference proteome</keyword>
<organism>
    <name type="scientific">Shigella dysenteriae serotype 1 (strain Sd197)</name>
    <dbReference type="NCBI Taxonomy" id="300267"/>
    <lineage>
        <taxon>Bacteria</taxon>
        <taxon>Pseudomonadati</taxon>
        <taxon>Pseudomonadota</taxon>
        <taxon>Gammaproteobacteria</taxon>
        <taxon>Enterobacterales</taxon>
        <taxon>Enterobacteriaceae</taxon>
        <taxon>Shigella</taxon>
    </lineage>
</organism>
<name>LUXS_SHIDS</name>
<comment type="function">
    <text evidence="1">Involved in the synthesis of autoinducer 2 (AI-2) which is secreted by bacteria and is used to communicate both the cell density and the metabolic potential of the environment. The regulation of gene expression in response to changes in cell density is called quorum sensing. Catalyzes the transformation of S-ribosylhomocysteine (RHC) to homocysteine (HC) and 4,5-dihydroxy-2,3-pentadione (DPD).</text>
</comment>
<comment type="catalytic activity">
    <reaction evidence="1">
        <text>S-(5-deoxy-D-ribos-5-yl)-L-homocysteine = (S)-4,5-dihydroxypentane-2,3-dione + L-homocysteine</text>
        <dbReference type="Rhea" id="RHEA:17753"/>
        <dbReference type="ChEBI" id="CHEBI:29484"/>
        <dbReference type="ChEBI" id="CHEBI:58195"/>
        <dbReference type="ChEBI" id="CHEBI:58199"/>
        <dbReference type="EC" id="4.4.1.21"/>
    </reaction>
</comment>
<comment type="cofactor">
    <cofactor evidence="1">
        <name>Fe cation</name>
        <dbReference type="ChEBI" id="CHEBI:24875"/>
    </cofactor>
    <text evidence="1">Binds 1 Fe cation per subunit.</text>
</comment>
<comment type="subunit">
    <text evidence="1">Homodimer.</text>
</comment>
<comment type="similarity">
    <text evidence="1">Belongs to the LuxS family.</text>
</comment>
<feature type="chain" id="PRO_0000298031" description="S-ribosylhomocysteine lyase">
    <location>
        <begin position="1"/>
        <end position="171"/>
    </location>
</feature>
<feature type="binding site" evidence="1">
    <location>
        <position position="54"/>
    </location>
    <ligand>
        <name>Fe cation</name>
        <dbReference type="ChEBI" id="CHEBI:24875"/>
    </ligand>
</feature>
<feature type="binding site" evidence="1">
    <location>
        <position position="58"/>
    </location>
    <ligand>
        <name>Fe cation</name>
        <dbReference type="ChEBI" id="CHEBI:24875"/>
    </ligand>
</feature>
<feature type="binding site" evidence="1">
    <location>
        <position position="128"/>
    </location>
    <ligand>
        <name>Fe cation</name>
        <dbReference type="ChEBI" id="CHEBI:24875"/>
    </ligand>
</feature>
<gene>
    <name evidence="1" type="primary">luxS</name>
    <name type="ordered locus">SDY_2884</name>
</gene>
<reference key="1">
    <citation type="journal article" date="2005" name="Nucleic Acids Res.">
        <title>Genome dynamics and diversity of Shigella species, the etiologic agents of bacillary dysentery.</title>
        <authorList>
            <person name="Yang F."/>
            <person name="Yang J."/>
            <person name="Zhang X."/>
            <person name="Chen L."/>
            <person name="Jiang Y."/>
            <person name="Yan Y."/>
            <person name="Tang X."/>
            <person name="Wang J."/>
            <person name="Xiong Z."/>
            <person name="Dong J."/>
            <person name="Xue Y."/>
            <person name="Zhu Y."/>
            <person name="Xu X."/>
            <person name="Sun L."/>
            <person name="Chen S."/>
            <person name="Nie H."/>
            <person name="Peng J."/>
            <person name="Xu J."/>
            <person name="Wang Y."/>
            <person name="Yuan Z."/>
            <person name="Wen Y."/>
            <person name="Yao Z."/>
            <person name="Shen Y."/>
            <person name="Qiang B."/>
            <person name="Hou Y."/>
            <person name="Yu J."/>
            <person name="Jin Q."/>
        </authorList>
    </citation>
    <scope>NUCLEOTIDE SEQUENCE [LARGE SCALE GENOMIC DNA]</scope>
    <source>
        <strain>Sd197</strain>
    </source>
</reference>